<sequence length="105" mass="11414">MFAVIKTGGKQYRVAANDVLTIEKLEATAGDSIEFTEVLVIGEGADAAIGAPFVTGASVKAEVVEQNRGKKVIAFKKRRRQNSKRSRGHRQHHTVVRITDIVAAK</sequence>
<keyword id="KW-0687">Ribonucleoprotein</keyword>
<keyword id="KW-0689">Ribosomal protein</keyword>
<keyword id="KW-0694">RNA-binding</keyword>
<keyword id="KW-0699">rRNA-binding</keyword>
<dbReference type="EMBL" id="AM236080">
    <property type="protein sequence ID" value="CAK10159.1"/>
    <property type="molecule type" value="Genomic_DNA"/>
</dbReference>
<dbReference type="RefSeq" id="WP_003543907.1">
    <property type="nucleotide sequence ID" value="NC_008380.1"/>
</dbReference>
<dbReference type="SMR" id="Q1MA81"/>
<dbReference type="EnsemblBacteria" id="CAK10159">
    <property type="protein sequence ID" value="CAK10159"/>
    <property type="gene ID" value="RL4676"/>
</dbReference>
<dbReference type="GeneID" id="84672329"/>
<dbReference type="KEGG" id="rle:RL4676"/>
<dbReference type="eggNOG" id="COG0261">
    <property type="taxonomic scope" value="Bacteria"/>
</dbReference>
<dbReference type="HOGENOM" id="CLU_061463_3_2_5"/>
<dbReference type="Proteomes" id="UP000006575">
    <property type="component" value="Chromosome"/>
</dbReference>
<dbReference type="GO" id="GO:0005737">
    <property type="term" value="C:cytoplasm"/>
    <property type="evidence" value="ECO:0007669"/>
    <property type="project" value="UniProtKB-ARBA"/>
</dbReference>
<dbReference type="GO" id="GO:1990904">
    <property type="term" value="C:ribonucleoprotein complex"/>
    <property type="evidence" value="ECO:0007669"/>
    <property type="project" value="UniProtKB-KW"/>
</dbReference>
<dbReference type="GO" id="GO:0005840">
    <property type="term" value="C:ribosome"/>
    <property type="evidence" value="ECO:0007669"/>
    <property type="project" value="UniProtKB-KW"/>
</dbReference>
<dbReference type="GO" id="GO:0019843">
    <property type="term" value="F:rRNA binding"/>
    <property type="evidence" value="ECO:0007669"/>
    <property type="project" value="UniProtKB-UniRule"/>
</dbReference>
<dbReference type="GO" id="GO:0003735">
    <property type="term" value="F:structural constituent of ribosome"/>
    <property type="evidence" value="ECO:0007669"/>
    <property type="project" value="InterPro"/>
</dbReference>
<dbReference type="GO" id="GO:0006412">
    <property type="term" value="P:translation"/>
    <property type="evidence" value="ECO:0007669"/>
    <property type="project" value="UniProtKB-UniRule"/>
</dbReference>
<dbReference type="HAMAP" id="MF_01363">
    <property type="entry name" value="Ribosomal_bL21"/>
    <property type="match status" value="1"/>
</dbReference>
<dbReference type="InterPro" id="IPR028909">
    <property type="entry name" value="bL21-like"/>
</dbReference>
<dbReference type="InterPro" id="IPR036164">
    <property type="entry name" value="bL21-like_sf"/>
</dbReference>
<dbReference type="InterPro" id="IPR001787">
    <property type="entry name" value="Ribosomal_bL21"/>
</dbReference>
<dbReference type="NCBIfam" id="TIGR00061">
    <property type="entry name" value="L21"/>
    <property type="match status" value="1"/>
</dbReference>
<dbReference type="PANTHER" id="PTHR21349">
    <property type="entry name" value="50S RIBOSOMAL PROTEIN L21"/>
    <property type="match status" value="1"/>
</dbReference>
<dbReference type="PANTHER" id="PTHR21349:SF0">
    <property type="entry name" value="LARGE RIBOSOMAL SUBUNIT PROTEIN BL21M"/>
    <property type="match status" value="1"/>
</dbReference>
<dbReference type="Pfam" id="PF00829">
    <property type="entry name" value="Ribosomal_L21p"/>
    <property type="match status" value="1"/>
</dbReference>
<dbReference type="SUPFAM" id="SSF141091">
    <property type="entry name" value="L21p-like"/>
    <property type="match status" value="1"/>
</dbReference>
<organism>
    <name type="scientific">Rhizobium johnstonii (strain DSM 114642 / LMG 32736 / 3841)</name>
    <name type="common">Rhizobium leguminosarum bv. viciae</name>
    <dbReference type="NCBI Taxonomy" id="216596"/>
    <lineage>
        <taxon>Bacteria</taxon>
        <taxon>Pseudomonadati</taxon>
        <taxon>Pseudomonadota</taxon>
        <taxon>Alphaproteobacteria</taxon>
        <taxon>Hyphomicrobiales</taxon>
        <taxon>Rhizobiaceae</taxon>
        <taxon>Rhizobium/Agrobacterium group</taxon>
        <taxon>Rhizobium</taxon>
        <taxon>Rhizobium johnstonii</taxon>
    </lineage>
</organism>
<name>RL21_RHIJ3</name>
<protein>
    <recommendedName>
        <fullName evidence="1">Large ribosomal subunit protein bL21</fullName>
    </recommendedName>
    <alternativeName>
        <fullName evidence="2">50S ribosomal protein L21</fullName>
    </alternativeName>
</protein>
<gene>
    <name evidence="1" type="primary">rplU</name>
    <name type="ordered locus">RL4676</name>
</gene>
<comment type="function">
    <text evidence="1">This protein binds to 23S rRNA in the presence of protein L20.</text>
</comment>
<comment type="subunit">
    <text evidence="1">Part of the 50S ribosomal subunit. Contacts protein L20.</text>
</comment>
<comment type="similarity">
    <text evidence="1">Belongs to the bacterial ribosomal protein bL21 family.</text>
</comment>
<feature type="chain" id="PRO_0000270717" description="Large ribosomal subunit protein bL21">
    <location>
        <begin position="1"/>
        <end position="105"/>
    </location>
</feature>
<evidence type="ECO:0000255" key="1">
    <source>
        <dbReference type="HAMAP-Rule" id="MF_01363"/>
    </source>
</evidence>
<evidence type="ECO:0000305" key="2"/>
<reference key="1">
    <citation type="journal article" date="2006" name="Genome Biol.">
        <title>The genome of Rhizobium leguminosarum has recognizable core and accessory components.</title>
        <authorList>
            <person name="Young J.P.W."/>
            <person name="Crossman L.C."/>
            <person name="Johnston A.W.B."/>
            <person name="Thomson N.R."/>
            <person name="Ghazoui Z.F."/>
            <person name="Hull K.H."/>
            <person name="Wexler M."/>
            <person name="Curson A.R.J."/>
            <person name="Todd J.D."/>
            <person name="Poole P.S."/>
            <person name="Mauchline T.H."/>
            <person name="East A.K."/>
            <person name="Quail M.A."/>
            <person name="Churcher C."/>
            <person name="Arrowsmith C."/>
            <person name="Cherevach I."/>
            <person name="Chillingworth T."/>
            <person name="Clarke K."/>
            <person name="Cronin A."/>
            <person name="Davis P."/>
            <person name="Fraser A."/>
            <person name="Hance Z."/>
            <person name="Hauser H."/>
            <person name="Jagels K."/>
            <person name="Moule S."/>
            <person name="Mungall K."/>
            <person name="Norbertczak H."/>
            <person name="Rabbinowitsch E."/>
            <person name="Sanders M."/>
            <person name="Simmonds M."/>
            <person name="Whitehead S."/>
            <person name="Parkhill J."/>
        </authorList>
    </citation>
    <scope>NUCLEOTIDE SEQUENCE [LARGE SCALE GENOMIC DNA]</scope>
    <source>
        <strain>DSM 114642 / LMG 32736 / 3841</strain>
    </source>
</reference>
<accession>Q1MA81</accession>
<proteinExistence type="inferred from homology"/>